<accession>B5EZ07</accession>
<dbReference type="EMBL" id="CP001138">
    <property type="protein sequence ID" value="ACH51801.1"/>
    <property type="molecule type" value="Genomic_DNA"/>
</dbReference>
<dbReference type="RefSeq" id="WP_000499872.1">
    <property type="nucleotide sequence ID" value="NC_011149.1"/>
</dbReference>
<dbReference type="SMR" id="B5EZ07"/>
<dbReference type="KEGG" id="sea:SeAg_B4101"/>
<dbReference type="HOGENOM" id="CLU_007831_2_2_6"/>
<dbReference type="Proteomes" id="UP000008819">
    <property type="component" value="Chromosome"/>
</dbReference>
<dbReference type="GO" id="GO:0005829">
    <property type="term" value="C:cytosol"/>
    <property type="evidence" value="ECO:0007669"/>
    <property type="project" value="TreeGrafter"/>
</dbReference>
<dbReference type="GO" id="GO:0050660">
    <property type="term" value="F:flavin adenine dinucleotide binding"/>
    <property type="evidence" value="ECO:0007669"/>
    <property type="project" value="UniProtKB-UniRule"/>
</dbReference>
<dbReference type="GO" id="GO:0030488">
    <property type="term" value="P:tRNA methylation"/>
    <property type="evidence" value="ECO:0007669"/>
    <property type="project" value="TreeGrafter"/>
</dbReference>
<dbReference type="GO" id="GO:0002098">
    <property type="term" value="P:tRNA wobble uridine modification"/>
    <property type="evidence" value="ECO:0007669"/>
    <property type="project" value="InterPro"/>
</dbReference>
<dbReference type="FunFam" id="1.10.10.1800:FF:000001">
    <property type="entry name" value="tRNA uridine 5-carboxymethylaminomethyl modification enzyme MnmG"/>
    <property type="match status" value="1"/>
</dbReference>
<dbReference type="FunFam" id="1.10.150.570:FF:000001">
    <property type="entry name" value="tRNA uridine 5-carboxymethylaminomethyl modification enzyme MnmG"/>
    <property type="match status" value="1"/>
</dbReference>
<dbReference type="FunFam" id="3.50.50.60:FF:000002">
    <property type="entry name" value="tRNA uridine 5-carboxymethylaminomethyl modification enzyme MnmG"/>
    <property type="match status" value="1"/>
</dbReference>
<dbReference type="FunFam" id="3.50.50.60:FF:000010">
    <property type="entry name" value="tRNA uridine 5-carboxymethylaminomethyl modification enzyme MnmG"/>
    <property type="match status" value="1"/>
</dbReference>
<dbReference type="Gene3D" id="3.50.50.60">
    <property type="entry name" value="FAD/NAD(P)-binding domain"/>
    <property type="match status" value="2"/>
</dbReference>
<dbReference type="Gene3D" id="1.10.150.570">
    <property type="entry name" value="GidA associated domain, C-terminal subdomain"/>
    <property type="match status" value="1"/>
</dbReference>
<dbReference type="Gene3D" id="1.10.10.1800">
    <property type="entry name" value="tRNA uridine 5-carboxymethylaminomethyl modification enzyme MnmG/GidA"/>
    <property type="match status" value="1"/>
</dbReference>
<dbReference type="HAMAP" id="MF_00129">
    <property type="entry name" value="MnmG_GidA"/>
    <property type="match status" value="1"/>
</dbReference>
<dbReference type="InterPro" id="IPR036188">
    <property type="entry name" value="FAD/NAD-bd_sf"/>
</dbReference>
<dbReference type="InterPro" id="IPR049312">
    <property type="entry name" value="GIDA_C_N"/>
</dbReference>
<dbReference type="InterPro" id="IPR004416">
    <property type="entry name" value="MnmG"/>
</dbReference>
<dbReference type="InterPro" id="IPR002218">
    <property type="entry name" value="MnmG-rel"/>
</dbReference>
<dbReference type="InterPro" id="IPR020595">
    <property type="entry name" value="MnmG-rel_CS"/>
</dbReference>
<dbReference type="InterPro" id="IPR026904">
    <property type="entry name" value="MnmG_C"/>
</dbReference>
<dbReference type="InterPro" id="IPR047001">
    <property type="entry name" value="MnmG_C_subdom"/>
</dbReference>
<dbReference type="InterPro" id="IPR044920">
    <property type="entry name" value="MnmG_C_subdom_sf"/>
</dbReference>
<dbReference type="InterPro" id="IPR040131">
    <property type="entry name" value="MnmG_N"/>
</dbReference>
<dbReference type="NCBIfam" id="TIGR00136">
    <property type="entry name" value="mnmG_gidA"/>
    <property type="match status" value="1"/>
</dbReference>
<dbReference type="PANTHER" id="PTHR11806">
    <property type="entry name" value="GLUCOSE INHIBITED DIVISION PROTEIN A"/>
    <property type="match status" value="1"/>
</dbReference>
<dbReference type="PANTHER" id="PTHR11806:SF0">
    <property type="entry name" value="PROTEIN MTO1 HOMOLOG, MITOCHONDRIAL"/>
    <property type="match status" value="1"/>
</dbReference>
<dbReference type="Pfam" id="PF01134">
    <property type="entry name" value="GIDA"/>
    <property type="match status" value="1"/>
</dbReference>
<dbReference type="Pfam" id="PF21680">
    <property type="entry name" value="GIDA_C_1st"/>
    <property type="match status" value="1"/>
</dbReference>
<dbReference type="Pfam" id="PF13932">
    <property type="entry name" value="SAM_GIDA_C"/>
    <property type="match status" value="1"/>
</dbReference>
<dbReference type="SMART" id="SM01228">
    <property type="entry name" value="GIDA_assoc_3"/>
    <property type="match status" value="1"/>
</dbReference>
<dbReference type="SUPFAM" id="SSF51905">
    <property type="entry name" value="FAD/NAD(P)-binding domain"/>
    <property type="match status" value="1"/>
</dbReference>
<dbReference type="PROSITE" id="PS01280">
    <property type="entry name" value="GIDA_1"/>
    <property type="match status" value="1"/>
</dbReference>
<dbReference type="PROSITE" id="PS01281">
    <property type="entry name" value="GIDA_2"/>
    <property type="match status" value="1"/>
</dbReference>
<organism>
    <name type="scientific">Salmonella agona (strain SL483)</name>
    <dbReference type="NCBI Taxonomy" id="454166"/>
    <lineage>
        <taxon>Bacteria</taxon>
        <taxon>Pseudomonadati</taxon>
        <taxon>Pseudomonadota</taxon>
        <taxon>Gammaproteobacteria</taxon>
        <taxon>Enterobacterales</taxon>
        <taxon>Enterobacteriaceae</taxon>
        <taxon>Salmonella</taxon>
    </lineage>
</organism>
<sequence length="629" mass="69640">MFYQDPFDVIIIGGGHAGTEAAMAAARMGQQTLLLTHNIDTLGQMSCNPAIGGIGKGHLVKEVDALGGLMAKAIDQAGIQFRILNASKGPAVRATRAQADRVLYRQAVRTALENQPNLMIFQQAVEDLIVENDRVVGAVTQMGLKFRAKAVVLTVGTFLDGKIHIGLDNYSGGRAGDPPSIPLSRRLRELPLRVSRLKTGTPPRIDARTIDFSVLAQQHGDNPMPVFSFMGNASQHPQQVPCYITHTNEKTHDVIRNNLDRSPMYAGVIEGIGPRYCPSIEDKVMRFADRNQHQIFLEPEGLTSNEIYPNGISTSLPFDVQMQIVRSMQGMENAKIVRPGYAIEYDFFDPRDLKPTLESKFIHGLFFAGQINGTTGYEEAAAQGLLAGLNAARLSADKEGWAPARSQAYLGVLVDDLCTLGTKEPYRMFTSRAEYRLMLREDNADLRLTEMGRELGLVDDERWARFNEKLENIERERQRLKSTWVTPSAESADEVNAHLTTPLSREASGEDLLRRPEMTYAQLTSLAAFAPALEDEQAAEQVEIQVKYEGYIARQQDEIEKQLRNENTLLPATLDYRQVSGLSNEVIAKLNDHKPASIGQASRISGVTPAAISILLVWLKKQGMLRRSA</sequence>
<gene>
    <name evidence="1" type="primary">mnmG</name>
    <name evidence="1" type="synonym">gidA</name>
    <name type="ordered locus">SeAg_B4101</name>
</gene>
<feature type="chain" id="PRO_1000095659" description="tRNA uridine 5-carboxymethylaminomethyl modification enzyme MnmG">
    <location>
        <begin position="1"/>
        <end position="629"/>
    </location>
</feature>
<feature type="binding site" evidence="1">
    <location>
        <begin position="13"/>
        <end position="18"/>
    </location>
    <ligand>
        <name>FAD</name>
        <dbReference type="ChEBI" id="CHEBI:57692"/>
    </ligand>
</feature>
<feature type="binding site" evidence="1">
    <location>
        <position position="125"/>
    </location>
    <ligand>
        <name>FAD</name>
        <dbReference type="ChEBI" id="CHEBI:57692"/>
    </ligand>
</feature>
<feature type="binding site" evidence="1">
    <location>
        <position position="180"/>
    </location>
    <ligand>
        <name>FAD</name>
        <dbReference type="ChEBI" id="CHEBI:57692"/>
    </ligand>
</feature>
<feature type="binding site" evidence="1">
    <location>
        <begin position="273"/>
        <end position="287"/>
    </location>
    <ligand>
        <name>NAD(+)</name>
        <dbReference type="ChEBI" id="CHEBI:57540"/>
    </ligand>
</feature>
<feature type="binding site" evidence="1">
    <location>
        <position position="370"/>
    </location>
    <ligand>
        <name>FAD</name>
        <dbReference type="ChEBI" id="CHEBI:57692"/>
    </ligand>
</feature>
<name>MNMG_SALA4</name>
<comment type="function">
    <text evidence="1">NAD-binding protein involved in the addition of a carboxymethylaminomethyl (cmnm) group at the wobble position (U34) of certain tRNAs, forming tRNA-cmnm(5)s(2)U34.</text>
</comment>
<comment type="cofactor">
    <cofactor evidence="1">
        <name>FAD</name>
        <dbReference type="ChEBI" id="CHEBI:57692"/>
    </cofactor>
</comment>
<comment type="subunit">
    <text evidence="1">Homodimer. Heterotetramer of two MnmE and two MnmG subunits.</text>
</comment>
<comment type="subcellular location">
    <subcellularLocation>
        <location evidence="1">Cytoplasm</location>
    </subcellularLocation>
</comment>
<comment type="similarity">
    <text evidence="1">Belongs to the MnmG family.</text>
</comment>
<proteinExistence type="inferred from homology"/>
<reference key="1">
    <citation type="journal article" date="2011" name="J. Bacteriol.">
        <title>Comparative genomics of 28 Salmonella enterica isolates: evidence for CRISPR-mediated adaptive sublineage evolution.</title>
        <authorList>
            <person name="Fricke W.F."/>
            <person name="Mammel M.K."/>
            <person name="McDermott P.F."/>
            <person name="Tartera C."/>
            <person name="White D.G."/>
            <person name="Leclerc J.E."/>
            <person name="Ravel J."/>
            <person name="Cebula T.A."/>
        </authorList>
    </citation>
    <scope>NUCLEOTIDE SEQUENCE [LARGE SCALE GENOMIC DNA]</scope>
    <source>
        <strain>SL483</strain>
    </source>
</reference>
<evidence type="ECO:0000255" key="1">
    <source>
        <dbReference type="HAMAP-Rule" id="MF_00129"/>
    </source>
</evidence>
<protein>
    <recommendedName>
        <fullName evidence="1">tRNA uridine 5-carboxymethylaminomethyl modification enzyme MnmG</fullName>
    </recommendedName>
    <alternativeName>
        <fullName evidence="1">Glucose-inhibited division protein A</fullName>
    </alternativeName>
</protein>
<keyword id="KW-0963">Cytoplasm</keyword>
<keyword id="KW-0274">FAD</keyword>
<keyword id="KW-0285">Flavoprotein</keyword>
<keyword id="KW-0520">NAD</keyword>
<keyword id="KW-0819">tRNA processing</keyword>